<sequence length="329" mass="35322">MIRIAIDAMGGDFGAEPIISGVIEALKEAEFKAVLVGDSNAIKPLIPQPYLKNIEFIEATEVISMSDGATDALKRKDSTIYKAVELLKEKEVDAVVSAGHSGATMSLATLRVGRLKNVSRPAIATLMPNSKETATLVLDVGANVDCRSEHLFQFAIMGEAYAKEILGRKEPKVGLLSNGEEESKGNEVSKEAFKLVSRLDSFVGNAEGNQIFDGSIDVMVCDGFMGNILLKTSEGVADAIGKIIKKQVKKSPLAMAGSVLMRKVFKTLKKQVSYDEYGGAPLLGVNGCVIISHGKSNSKAIKNAIFQAIKFANSNINKVIEEELSHFAR</sequence>
<evidence type="ECO:0000255" key="1">
    <source>
        <dbReference type="HAMAP-Rule" id="MF_00019"/>
    </source>
</evidence>
<comment type="function">
    <text evidence="1">Catalyzes the reversible formation of acyl-phosphate (acyl-PO(4)) from acyl-[acyl-carrier-protein] (acyl-ACP). This enzyme utilizes acyl-ACP as fatty acyl donor, but not acyl-CoA.</text>
</comment>
<comment type="catalytic activity">
    <reaction evidence="1">
        <text>a fatty acyl-[ACP] + phosphate = an acyl phosphate + holo-[ACP]</text>
        <dbReference type="Rhea" id="RHEA:42292"/>
        <dbReference type="Rhea" id="RHEA-COMP:9685"/>
        <dbReference type="Rhea" id="RHEA-COMP:14125"/>
        <dbReference type="ChEBI" id="CHEBI:43474"/>
        <dbReference type="ChEBI" id="CHEBI:59918"/>
        <dbReference type="ChEBI" id="CHEBI:64479"/>
        <dbReference type="ChEBI" id="CHEBI:138651"/>
        <dbReference type="EC" id="2.3.1.274"/>
    </reaction>
</comment>
<comment type="pathway">
    <text evidence="1">Lipid metabolism; phospholipid metabolism.</text>
</comment>
<comment type="subunit">
    <text evidence="1">Homodimer. Probably interacts with PlsY.</text>
</comment>
<comment type="subcellular location">
    <subcellularLocation>
        <location evidence="1">Cytoplasm</location>
    </subcellularLocation>
    <text evidence="1">Associated with the membrane possibly through PlsY.</text>
</comment>
<comment type="similarity">
    <text evidence="1">Belongs to the PlsX family.</text>
</comment>
<feature type="chain" id="PRO_1000001740" description="Phosphate acyltransferase">
    <location>
        <begin position="1"/>
        <end position="329"/>
    </location>
</feature>
<protein>
    <recommendedName>
        <fullName evidence="1">Phosphate acyltransferase</fullName>
        <ecNumber evidence="1">2.3.1.274</ecNumber>
    </recommendedName>
    <alternativeName>
        <fullName evidence="1">Acyl-ACP phosphotransacylase</fullName>
    </alternativeName>
    <alternativeName>
        <fullName evidence="1">Acyl-[acyl-carrier-protein]--phosphate acyltransferase</fullName>
    </alternativeName>
    <alternativeName>
        <fullName evidence="1">Phosphate-acyl-ACP acyltransferase</fullName>
    </alternativeName>
</protein>
<keyword id="KW-0963">Cytoplasm</keyword>
<keyword id="KW-0444">Lipid biosynthesis</keyword>
<keyword id="KW-0443">Lipid metabolism</keyword>
<keyword id="KW-0594">Phospholipid biosynthesis</keyword>
<keyword id="KW-1208">Phospholipid metabolism</keyword>
<keyword id="KW-0808">Transferase</keyword>
<proteinExistence type="inferred from homology"/>
<organism>
    <name type="scientific">Campylobacter concisus (strain 13826)</name>
    <dbReference type="NCBI Taxonomy" id="360104"/>
    <lineage>
        <taxon>Bacteria</taxon>
        <taxon>Pseudomonadati</taxon>
        <taxon>Campylobacterota</taxon>
        <taxon>Epsilonproteobacteria</taxon>
        <taxon>Campylobacterales</taxon>
        <taxon>Campylobacteraceae</taxon>
        <taxon>Campylobacter</taxon>
    </lineage>
</organism>
<dbReference type="EC" id="2.3.1.274" evidence="1"/>
<dbReference type="EMBL" id="CP000792">
    <property type="protein sequence ID" value="EAT98236.1"/>
    <property type="molecule type" value="Genomic_DNA"/>
</dbReference>
<dbReference type="RefSeq" id="WP_012001307.1">
    <property type="nucleotide sequence ID" value="NC_009802.2"/>
</dbReference>
<dbReference type="SMR" id="A7ZC02"/>
<dbReference type="STRING" id="360104.CCC13826_0987"/>
<dbReference type="KEGG" id="cco:CCC13826_0987"/>
<dbReference type="eggNOG" id="COG0416">
    <property type="taxonomic scope" value="Bacteria"/>
</dbReference>
<dbReference type="HOGENOM" id="CLU_039379_1_1_7"/>
<dbReference type="OrthoDB" id="9806408at2"/>
<dbReference type="UniPathway" id="UPA00085"/>
<dbReference type="Proteomes" id="UP000001121">
    <property type="component" value="Chromosome"/>
</dbReference>
<dbReference type="GO" id="GO:0005737">
    <property type="term" value="C:cytoplasm"/>
    <property type="evidence" value="ECO:0007669"/>
    <property type="project" value="UniProtKB-SubCell"/>
</dbReference>
<dbReference type="GO" id="GO:0043811">
    <property type="term" value="F:phosphate:acyl-[acyl carrier protein] acyltransferase activity"/>
    <property type="evidence" value="ECO:0007669"/>
    <property type="project" value="UniProtKB-UniRule"/>
</dbReference>
<dbReference type="GO" id="GO:0006633">
    <property type="term" value="P:fatty acid biosynthetic process"/>
    <property type="evidence" value="ECO:0007669"/>
    <property type="project" value="UniProtKB-UniRule"/>
</dbReference>
<dbReference type="GO" id="GO:0008654">
    <property type="term" value="P:phospholipid biosynthetic process"/>
    <property type="evidence" value="ECO:0007669"/>
    <property type="project" value="UniProtKB-KW"/>
</dbReference>
<dbReference type="Gene3D" id="3.40.718.10">
    <property type="entry name" value="Isopropylmalate Dehydrogenase"/>
    <property type="match status" value="1"/>
</dbReference>
<dbReference type="HAMAP" id="MF_00019">
    <property type="entry name" value="PlsX"/>
    <property type="match status" value="1"/>
</dbReference>
<dbReference type="InterPro" id="IPR003664">
    <property type="entry name" value="FA_synthesis"/>
</dbReference>
<dbReference type="InterPro" id="IPR012281">
    <property type="entry name" value="Phospholipid_synth_PlsX-like"/>
</dbReference>
<dbReference type="NCBIfam" id="TIGR00182">
    <property type="entry name" value="plsX"/>
    <property type="match status" value="1"/>
</dbReference>
<dbReference type="PANTHER" id="PTHR30100">
    <property type="entry name" value="FATTY ACID/PHOSPHOLIPID SYNTHESIS PROTEIN PLSX"/>
    <property type="match status" value="1"/>
</dbReference>
<dbReference type="PANTHER" id="PTHR30100:SF1">
    <property type="entry name" value="PHOSPHATE ACYLTRANSFERASE"/>
    <property type="match status" value="1"/>
</dbReference>
<dbReference type="Pfam" id="PF02504">
    <property type="entry name" value="FA_synthesis"/>
    <property type="match status" value="1"/>
</dbReference>
<dbReference type="PIRSF" id="PIRSF002465">
    <property type="entry name" value="Phsphlp_syn_PlsX"/>
    <property type="match status" value="1"/>
</dbReference>
<dbReference type="SUPFAM" id="SSF53659">
    <property type="entry name" value="Isocitrate/Isopropylmalate dehydrogenase-like"/>
    <property type="match status" value="1"/>
</dbReference>
<accession>A7ZC02</accession>
<name>PLSX_CAMC1</name>
<reference key="1">
    <citation type="submission" date="2007-10" db="EMBL/GenBank/DDBJ databases">
        <title>Genome sequence of Campylobacter concisus 13826 isolated from human feces.</title>
        <authorList>
            <person name="Fouts D.E."/>
            <person name="Mongodin E.F."/>
            <person name="Puiu D."/>
            <person name="Sebastian Y."/>
            <person name="Miller W.G."/>
            <person name="Mandrell R.E."/>
            <person name="On S."/>
            <person name="Nelson K.E."/>
        </authorList>
    </citation>
    <scope>NUCLEOTIDE SEQUENCE [LARGE SCALE GENOMIC DNA]</scope>
    <source>
        <strain>13826</strain>
    </source>
</reference>
<gene>
    <name evidence="1" type="primary">plsX</name>
    <name type="ordered locus">Ccon26_04070</name>
    <name type="ORF">CCC13826_0987</name>
</gene>